<gene>
    <name evidence="1" type="primary">cinA</name>
    <name type="ordered locus">SP70585_2020</name>
</gene>
<reference key="1">
    <citation type="journal article" date="2010" name="Genome Biol.">
        <title>Structure and dynamics of the pan-genome of Streptococcus pneumoniae and closely related species.</title>
        <authorList>
            <person name="Donati C."/>
            <person name="Hiller N.L."/>
            <person name="Tettelin H."/>
            <person name="Muzzi A."/>
            <person name="Croucher N.J."/>
            <person name="Angiuoli S.V."/>
            <person name="Oggioni M."/>
            <person name="Dunning Hotopp J.C."/>
            <person name="Hu F.Z."/>
            <person name="Riley D.R."/>
            <person name="Covacci A."/>
            <person name="Mitchell T.J."/>
            <person name="Bentley S.D."/>
            <person name="Kilian M."/>
            <person name="Ehrlich G.D."/>
            <person name="Rappuoli R."/>
            <person name="Moxon E.R."/>
            <person name="Masignani V."/>
        </authorList>
    </citation>
    <scope>NUCLEOTIDE SEQUENCE [LARGE SCALE GENOMIC DNA]</scope>
    <source>
        <strain>70585</strain>
    </source>
</reference>
<protein>
    <recommendedName>
        <fullName evidence="1">Putative competence-damage inducible protein</fullName>
    </recommendedName>
</protein>
<sequence length="418" mass="45047">MKAEIIAVGTEILTGQIVNTNAQFLSEKLAEIGVDVYFQTAVGDNEVRLLSLLEIASQRSSLVILTGGLGPTEDDLTKQTLAKFLGKALVFDPQAQEKLDIFFALRPDYARTPNNERQAQIVEGAIPLPNETGLAVGGKLEVDGVTYVVLPGPPSELKPMVLNQLLPKLMTGSKLYSRVLRFFGIGESQLVTILADLIDNQIDPTLAPYAKTGEVTLRLSTKASSQEEANQALDILENQILDCQTFEGISLRDFCYGYGEETSLASIVVEELKRQGKTIAAAESLTAGLFQATVANFSGASSIFKGGFVTYSLEEKSRMLDIPAKNLEEHGVVSEFTAQKMAEQARSKTQSDFGISLTGVAGPDSLEGHPVGTVFIGLAQEQGTEVIKVNIGGRSRADVRHIAVMHAFNLVRKALLSD</sequence>
<feature type="chain" id="PRO_1000124990" description="Putative competence-damage inducible protein">
    <location>
        <begin position="1"/>
        <end position="418"/>
    </location>
</feature>
<dbReference type="EMBL" id="CP000918">
    <property type="protein sequence ID" value="ACO16876.1"/>
    <property type="molecule type" value="Genomic_DNA"/>
</dbReference>
<dbReference type="RefSeq" id="WP_000642705.1">
    <property type="nucleotide sequence ID" value="NC_012468.1"/>
</dbReference>
<dbReference type="SMR" id="C1C9K9"/>
<dbReference type="KEGG" id="snm:SP70585_2020"/>
<dbReference type="HOGENOM" id="CLU_030805_9_3_9"/>
<dbReference type="Proteomes" id="UP000002211">
    <property type="component" value="Chromosome"/>
</dbReference>
<dbReference type="CDD" id="cd00885">
    <property type="entry name" value="cinA"/>
    <property type="match status" value="1"/>
</dbReference>
<dbReference type="Gene3D" id="3.30.70.2860">
    <property type="match status" value="1"/>
</dbReference>
<dbReference type="Gene3D" id="3.90.950.20">
    <property type="entry name" value="CinA-like"/>
    <property type="match status" value="1"/>
</dbReference>
<dbReference type="Gene3D" id="3.40.980.10">
    <property type="entry name" value="MoaB/Mog-like domain"/>
    <property type="match status" value="1"/>
</dbReference>
<dbReference type="HAMAP" id="MF_00226_B">
    <property type="entry name" value="CinA_B"/>
    <property type="match status" value="1"/>
</dbReference>
<dbReference type="InterPro" id="IPR050101">
    <property type="entry name" value="CinA"/>
</dbReference>
<dbReference type="InterPro" id="IPR036653">
    <property type="entry name" value="CinA-like_C"/>
</dbReference>
<dbReference type="InterPro" id="IPR008136">
    <property type="entry name" value="CinA_C"/>
</dbReference>
<dbReference type="InterPro" id="IPR041424">
    <property type="entry name" value="CinA_KH"/>
</dbReference>
<dbReference type="InterPro" id="IPR008135">
    <property type="entry name" value="Competence-induced_CinA"/>
</dbReference>
<dbReference type="InterPro" id="IPR036425">
    <property type="entry name" value="MoaB/Mog-like_dom_sf"/>
</dbReference>
<dbReference type="InterPro" id="IPR001453">
    <property type="entry name" value="MoaB/Mog_dom"/>
</dbReference>
<dbReference type="NCBIfam" id="TIGR00200">
    <property type="entry name" value="cinA_nterm"/>
    <property type="match status" value="1"/>
</dbReference>
<dbReference type="NCBIfam" id="TIGR00199">
    <property type="entry name" value="PncC_domain"/>
    <property type="match status" value="1"/>
</dbReference>
<dbReference type="NCBIfam" id="NF001813">
    <property type="entry name" value="PRK00549.1"/>
    <property type="match status" value="1"/>
</dbReference>
<dbReference type="PANTHER" id="PTHR13939">
    <property type="entry name" value="NICOTINAMIDE-NUCLEOTIDE AMIDOHYDROLASE PNCC"/>
    <property type="match status" value="1"/>
</dbReference>
<dbReference type="PANTHER" id="PTHR13939:SF0">
    <property type="entry name" value="NMN AMIDOHYDROLASE-LIKE PROTEIN YFAY"/>
    <property type="match status" value="1"/>
</dbReference>
<dbReference type="Pfam" id="PF02464">
    <property type="entry name" value="CinA"/>
    <property type="match status" value="1"/>
</dbReference>
<dbReference type="Pfam" id="PF18146">
    <property type="entry name" value="CinA_KH"/>
    <property type="match status" value="1"/>
</dbReference>
<dbReference type="Pfam" id="PF00994">
    <property type="entry name" value="MoCF_biosynth"/>
    <property type="match status" value="1"/>
</dbReference>
<dbReference type="PIRSF" id="PIRSF006728">
    <property type="entry name" value="CinA"/>
    <property type="match status" value="1"/>
</dbReference>
<dbReference type="SMART" id="SM00852">
    <property type="entry name" value="MoCF_biosynth"/>
    <property type="match status" value="1"/>
</dbReference>
<dbReference type="SUPFAM" id="SSF142433">
    <property type="entry name" value="CinA-like"/>
    <property type="match status" value="1"/>
</dbReference>
<dbReference type="SUPFAM" id="SSF53218">
    <property type="entry name" value="Molybdenum cofactor biosynthesis proteins"/>
    <property type="match status" value="1"/>
</dbReference>
<organism>
    <name type="scientific">Streptococcus pneumoniae (strain 70585)</name>
    <dbReference type="NCBI Taxonomy" id="488221"/>
    <lineage>
        <taxon>Bacteria</taxon>
        <taxon>Bacillati</taxon>
        <taxon>Bacillota</taxon>
        <taxon>Bacilli</taxon>
        <taxon>Lactobacillales</taxon>
        <taxon>Streptococcaceae</taxon>
        <taxon>Streptococcus</taxon>
    </lineage>
</organism>
<accession>C1C9K9</accession>
<name>CINA_STRP7</name>
<proteinExistence type="inferred from homology"/>
<comment type="similarity">
    <text evidence="1">Belongs to the CinA family.</text>
</comment>
<evidence type="ECO:0000255" key="1">
    <source>
        <dbReference type="HAMAP-Rule" id="MF_00226"/>
    </source>
</evidence>